<feature type="signal peptide" evidence="1">
    <location>
        <begin position="1"/>
        <end position="20"/>
    </location>
</feature>
<feature type="chain" id="PRO_0000330649" description="Probable GH family 25 lysozyme 3">
    <location>
        <begin position="21"/>
        <end position="480"/>
    </location>
</feature>
<feature type="domain" description="Ch-type lysozyme" evidence="2">
    <location>
        <begin position="21"/>
        <end position="231"/>
    </location>
</feature>
<feature type="region of interest" description="Disordered" evidence="3">
    <location>
        <begin position="219"/>
        <end position="480"/>
    </location>
</feature>
<feature type="compositionally biased region" description="Low complexity" evidence="3">
    <location>
        <begin position="219"/>
        <end position="472"/>
    </location>
</feature>
<feature type="active site" evidence="2">
    <location>
        <position position="25"/>
    </location>
</feature>
<feature type="active site" evidence="2">
    <location>
        <position position="114"/>
    </location>
</feature>
<feature type="active site" evidence="2">
    <location>
        <position position="116"/>
    </location>
</feature>
<feature type="glycosylation site" description="N-linked (GlcNAc...) asparagine" evidence="1">
    <location>
        <position position="423"/>
    </location>
</feature>
<feature type="glycosylation site" description="N-linked (GlcNAc...) asparagine" evidence="1">
    <location>
        <position position="428"/>
    </location>
</feature>
<feature type="glycosylation site" description="N-linked (GlcNAc...) asparagine" evidence="1">
    <location>
        <position position="437"/>
    </location>
</feature>
<feature type="glycosylation site" description="N-linked (GlcNAc...) asparagine" evidence="1">
    <location>
        <position position="446"/>
    </location>
</feature>
<feature type="glycosylation site" description="N-linked (GlcNAc...) asparagine" evidence="1">
    <location>
        <position position="468"/>
    </location>
</feature>
<gene>
    <name type="ORF">DDB_G0276439</name>
</gene>
<name>LYSG3_DICDI</name>
<sequence length="480" mass="46450">MNKLILSILSVLLIVSIASAGNGIDISSGTNPSSSDLACLAKQNSKIIVQTWSGGYGFNSNVPSIVQAAKSAGLSVDLYAFLCSQCSGITDPAEAIKTLVSKLNGVKYGTLWIDVEQCNGCWSSTLSSNAQYVQTAVQTASQLGVNVGVYSSEGEWPQTVGSLTSLSSFPLWYAHYDNNPSFSDQGYNFGGWSKAVMKQYQGTTTQCGVSVDLNWFPGSGSSTTSSSATSSSTTGRPLTSSSGAGTGGHSSSSGAGTGGHSSTTGGQTSGQTSGQTSGSSNQPLSSGSSQDSSNSGSSNQPLSSGSSQDSSNSGSSNQPLSSGSSQTSGQTSGSSNQPLSSGSSQDSGSNSGSQGTTGSQSGSSSSNPLTSGSQSGSSGSQSTSSGSQSGSSGATGTSSTASSTSATGSSSTGSSTGSSSGSNDSGSNDSGSSSGSNNSGSSSGSNNSGSSSGSASSSGSSGSSGSGNYTSGSGNGAFLF</sequence>
<evidence type="ECO:0000255" key="1"/>
<evidence type="ECO:0000255" key="2">
    <source>
        <dbReference type="PROSITE-ProRule" id="PRU01252"/>
    </source>
</evidence>
<evidence type="ECO:0000256" key="3">
    <source>
        <dbReference type="SAM" id="MobiDB-lite"/>
    </source>
</evidence>
<evidence type="ECO:0000305" key="4"/>
<reference key="1">
    <citation type="journal article" date="2002" name="Nature">
        <title>Sequence and analysis of chromosome 2 of Dictyostelium discoideum.</title>
        <authorList>
            <person name="Gloeckner G."/>
            <person name="Eichinger L."/>
            <person name="Szafranski K."/>
            <person name="Pachebat J.A."/>
            <person name="Bankier A.T."/>
            <person name="Dear P.H."/>
            <person name="Lehmann R."/>
            <person name="Baumgart C."/>
            <person name="Parra G."/>
            <person name="Abril J.F."/>
            <person name="Guigo R."/>
            <person name="Kumpf K."/>
            <person name="Tunggal B."/>
            <person name="Cox E.C."/>
            <person name="Quail M.A."/>
            <person name="Platzer M."/>
            <person name="Rosenthal A."/>
            <person name="Noegel A.A."/>
        </authorList>
    </citation>
    <scope>NUCLEOTIDE SEQUENCE [LARGE SCALE GENOMIC DNA]</scope>
    <source>
        <strain>AX4</strain>
    </source>
</reference>
<reference key="2">
    <citation type="journal article" date="2005" name="Nature">
        <title>The genome of the social amoeba Dictyostelium discoideum.</title>
        <authorList>
            <person name="Eichinger L."/>
            <person name="Pachebat J.A."/>
            <person name="Gloeckner G."/>
            <person name="Rajandream M.A."/>
            <person name="Sucgang R."/>
            <person name="Berriman M."/>
            <person name="Song J."/>
            <person name="Olsen R."/>
            <person name="Szafranski K."/>
            <person name="Xu Q."/>
            <person name="Tunggal B."/>
            <person name="Kummerfeld S."/>
            <person name="Madera M."/>
            <person name="Konfortov B.A."/>
            <person name="Rivero F."/>
            <person name="Bankier A.T."/>
            <person name="Lehmann R."/>
            <person name="Hamlin N."/>
            <person name="Davies R."/>
            <person name="Gaudet P."/>
            <person name="Fey P."/>
            <person name="Pilcher K."/>
            <person name="Chen G."/>
            <person name="Saunders D."/>
            <person name="Sodergren E.J."/>
            <person name="Davis P."/>
            <person name="Kerhornou A."/>
            <person name="Nie X."/>
            <person name="Hall N."/>
            <person name="Anjard C."/>
            <person name="Hemphill L."/>
            <person name="Bason N."/>
            <person name="Farbrother P."/>
            <person name="Desany B."/>
            <person name="Just E."/>
            <person name="Morio T."/>
            <person name="Rost R."/>
            <person name="Churcher C.M."/>
            <person name="Cooper J."/>
            <person name="Haydock S."/>
            <person name="van Driessche N."/>
            <person name="Cronin A."/>
            <person name="Goodhead I."/>
            <person name="Muzny D.M."/>
            <person name="Mourier T."/>
            <person name="Pain A."/>
            <person name="Lu M."/>
            <person name="Harper D."/>
            <person name="Lindsay R."/>
            <person name="Hauser H."/>
            <person name="James K.D."/>
            <person name="Quiles M."/>
            <person name="Madan Babu M."/>
            <person name="Saito T."/>
            <person name="Buchrieser C."/>
            <person name="Wardroper A."/>
            <person name="Felder M."/>
            <person name="Thangavelu M."/>
            <person name="Johnson D."/>
            <person name="Knights A."/>
            <person name="Loulseged H."/>
            <person name="Mungall K.L."/>
            <person name="Oliver K."/>
            <person name="Price C."/>
            <person name="Quail M.A."/>
            <person name="Urushihara H."/>
            <person name="Hernandez J."/>
            <person name="Rabbinowitsch E."/>
            <person name="Steffen D."/>
            <person name="Sanders M."/>
            <person name="Ma J."/>
            <person name="Kohara Y."/>
            <person name="Sharp S."/>
            <person name="Simmonds M.N."/>
            <person name="Spiegler S."/>
            <person name="Tivey A."/>
            <person name="Sugano S."/>
            <person name="White B."/>
            <person name="Walker D."/>
            <person name="Woodward J.R."/>
            <person name="Winckler T."/>
            <person name="Tanaka Y."/>
            <person name="Shaulsky G."/>
            <person name="Schleicher M."/>
            <person name="Weinstock G.M."/>
            <person name="Rosenthal A."/>
            <person name="Cox E.C."/>
            <person name="Chisholm R.L."/>
            <person name="Gibbs R.A."/>
            <person name="Loomis W.F."/>
            <person name="Platzer M."/>
            <person name="Kay R.R."/>
            <person name="Williams J.G."/>
            <person name="Dear P.H."/>
            <person name="Noegel A.A."/>
            <person name="Barrell B.G."/>
            <person name="Kuspa A."/>
        </authorList>
    </citation>
    <scope>NUCLEOTIDE SEQUENCE [LARGE SCALE GENOMIC DNA]</scope>
    <source>
        <strain>AX4</strain>
    </source>
</reference>
<keyword id="KW-0929">Antimicrobial</keyword>
<keyword id="KW-0081">Bacteriolytic enzyme</keyword>
<keyword id="KW-0325">Glycoprotein</keyword>
<keyword id="KW-0326">Glycosidase</keyword>
<keyword id="KW-0378">Hydrolase</keyword>
<keyword id="KW-1185">Reference proteome</keyword>
<keyword id="KW-0964">Secreted</keyword>
<keyword id="KW-0732">Signal</keyword>
<protein>
    <recommendedName>
        <fullName>Probable GH family 25 lysozyme 3</fullName>
        <ecNumber>3.2.1.17</ecNumber>
    </recommendedName>
    <alternativeName>
        <fullName>1,4-beta-N-acetylmuramidase 3</fullName>
    </alternativeName>
</protein>
<dbReference type="EC" id="3.2.1.17"/>
<dbReference type="EMBL" id="AAFI02000015">
    <property type="protein sequence ID" value="EAL69173.1"/>
    <property type="molecule type" value="Genomic_DNA"/>
</dbReference>
<dbReference type="RefSeq" id="XP_643144.1">
    <property type="nucleotide sequence ID" value="XM_638052.1"/>
</dbReference>
<dbReference type="SMR" id="Q8T2I5"/>
<dbReference type="GlyGen" id="Q8T2I5">
    <property type="glycosylation" value="5 sites"/>
</dbReference>
<dbReference type="PaxDb" id="44689-DDB0252582"/>
<dbReference type="EnsemblProtists" id="EAL69173">
    <property type="protein sequence ID" value="EAL69173"/>
    <property type="gene ID" value="DDB_G0276439"/>
</dbReference>
<dbReference type="GeneID" id="8620551"/>
<dbReference type="KEGG" id="ddi:DDB_G0276439"/>
<dbReference type="dictyBase" id="DDB_G0276439">
    <property type="gene designation" value="lyEh4"/>
</dbReference>
<dbReference type="VEuPathDB" id="AmoebaDB:DDB_G0276439"/>
<dbReference type="eggNOG" id="ENOG502SF04">
    <property type="taxonomic scope" value="Eukaryota"/>
</dbReference>
<dbReference type="HOGENOM" id="CLU_569163_0_0_1"/>
<dbReference type="InParanoid" id="Q8T2I5"/>
<dbReference type="OMA" id="NSFTHAY"/>
<dbReference type="PRO" id="PR:Q8T2I5"/>
<dbReference type="Proteomes" id="UP000002195">
    <property type="component" value="Chromosome 2"/>
</dbReference>
<dbReference type="GO" id="GO:0005576">
    <property type="term" value="C:extracellular region"/>
    <property type="evidence" value="ECO:0007669"/>
    <property type="project" value="UniProtKB-SubCell"/>
</dbReference>
<dbReference type="GO" id="GO:0003796">
    <property type="term" value="F:lysozyme activity"/>
    <property type="evidence" value="ECO:0007669"/>
    <property type="project" value="UniProtKB-EC"/>
</dbReference>
<dbReference type="GO" id="GO:0048870">
    <property type="term" value="P:cell motility"/>
    <property type="evidence" value="ECO:0000318"/>
    <property type="project" value="GO_Central"/>
</dbReference>
<dbReference type="GO" id="GO:0016998">
    <property type="term" value="P:cell wall macromolecule catabolic process"/>
    <property type="evidence" value="ECO:0007669"/>
    <property type="project" value="InterPro"/>
</dbReference>
<dbReference type="GO" id="GO:0098609">
    <property type="term" value="P:cell-cell adhesion"/>
    <property type="evidence" value="ECO:0000318"/>
    <property type="project" value="GO_Central"/>
</dbReference>
<dbReference type="GO" id="GO:0042742">
    <property type="term" value="P:defense response to bacterium"/>
    <property type="evidence" value="ECO:0007669"/>
    <property type="project" value="UniProtKB-KW"/>
</dbReference>
<dbReference type="GO" id="GO:0042593">
    <property type="term" value="P:glucose homeostasis"/>
    <property type="evidence" value="ECO:0000318"/>
    <property type="project" value="GO_Central"/>
</dbReference>
<dbReference type="GO" id="GO:0031640">
    <property type="term" value="P:killing of cells of another organism"/>
    <property type="evidence" value="ECO:0007669"/>
    <property type="project" value="UniProtKB-KW"/>
</dbReference>
<dbReference type="GO" id="GO:0009253">
    <property type="term" value="P:peptidoglycan catabolic process"/>
    <property type="evidence" value="ECO:0007669"/>
    <property type="project" value="InterPro"/>
</dbReference>
<dbReference type="GO" id="GO:0007165">
    <property type="term" value="P:signal transduction"/>
    <property type="evidence" value="ECO:0000318"/>
    <property type="project" value="GO_Central"/>
</dbReference>
<dbReference type="CDD" id="cd06416">
    <property type="entry name" value="GH25_Lys1-like"/>
    <property type="match status" value="1"/>
</dbReference>
<dbReference type="FunFam" id="3.20.20.80:FF:000249">
    <property type="entry name" value="Counting factor 50"/>
    <property type="match status" value="1"/>
</dbReference>
<dbReference type="Gene3D" id="3.20.20.80">
    <property type="entry name" value="Glycosidases"/>
    <property type="match status" value="1"/>
</dbReference>
<dbReference type="InterPro" id="IPR051595">
    <property type="entry name" value="GH25_Enzymes"/>
</dbReference>
<dbReference type="InterPro" id="IPR002053">
    <property type="entry name" value="Glyco_hydro_25"/>
</dbReference>
<dbReference type="InterPro" id="IPR017853">
    <property type="entry name" value="Glycoside_hydrolase_SF"/>
</dbReference>
<dbReference type="PANTHER" id="PTHR23208:SF11">
    <property type="entry name" value="COUNTING FACTOR 45-1-RELATED"/>
    <property type="match status" value="1"/>
</dbReference>
<dbReference type="PANTHER" id="PTHR23208">
    <property type="entry name" value="LYSOZYME PROTEIN"/>
    <property type="match status" value="1"/>
</dbReference>
<dbReference type="Pfam" id="PF01183">
    <property type="entry name" value="Glyco_hydro_25"/>
    <property type="match status" value="1"/>
</dbReference>
<dbReference type="SUPFAM" id="SSF51445">
    <property type="entry name" value="(Trans)glycosidases"/>
    <property type="match status" value="1"/>
</dbReference>
<dbReference type="PROSITE" id="PS51904">
    <property type="entry name" value="GLYCOSYL_HYDROL_F25_2"/>
    <property type="match status" value="1"/>
</dbReference>
<accession>Q8T2I5</accession>
<accession>Q551J0</accession>
<comment type="catalytic activity">
    <reaction>
        <text>Hydrolysis of (1-&gt;4)-beta-linkages between N-acetylmuramic acid and N-acetyl-D-glucosamine residues in a peptidoglycan and between N-acetyl-D-glucosamine residues in chitodextrins.</text>
        <dbReference type="EC" id="3.2.1.17"/>
    </reaction>
</comment>
<comment type="subcellular location">
    <subcellularLocation>
        <location evidence="4">Secreted</location>
    </subcellularLocation>
</comment>
<comment type="similarity">
    <text evidence="2 4">Belongs to the glycosyl hydrolase 25 family.</text>
</comment>
<proteinExistence type="inferred from homology"/>
<organism>
    <name type="scientific">Dictyostelium discoideum</name>
    <name type="common">Social amoeba</name>
    <dbReference type="NCBI Taxonomy" id="44689"/>
    <lineage>
        <taxon>Eukaryota</taxon>
        <taxon>Amoebozoa</taxon>
        <taxon>Evosea</taxon>
        <taxon>Eumycetozoa</taxon>
        <taxon>Dictyostelia</taxon>
        <taxon>Dictyosteliales</taxon>
        <taxon>Dictyosteliaceae</taxon>
        <taxon>Dictyostelium</taxon>
    </lineage>
</organism>